<evidence type="ECO:0000305" key="1"/>
<feature type="chain" id="PRO_0000134301" description="Small ribosomal subunit protein uS2c">
    <location>
        <begin position="1"/>
        <end position="235"/>
    </location>
</feature>
<accession>P06354</accession>
<proteinExistence type="inferred from homology"/>
<geneLocation type="chloroplast"/>
<name>RR2_MARPO</name>
<gene>
    <name type="primary">rps2</name>
</gene>
<comment type="subcellular location">
    <subcellularLocation>
        <location>Plastid</location>
        <location>Chloroplast</location>
    </subcellularLocation>
</comment>
<comment type="similarity">
    <text evidence="1">Belongs to the universal ribosomal protein uS2 family.</text>
</comment>
<keyword id="KW-0150">Chloroplast</keyword>
<keyword id="KW-0934">Plastid</keyword>
<keyword id="KW-0687">Ribonucleoprotein</keyword>
<keyword id="KW-0689">Ribosomal protein</keyword>
<dbReference type="EMBL" id="X04465">
    <property type="protein sequence ID" value="CAA28064.1"/>
    <property type="molecule type" value="Genomic_DNA"/>
</dbReference>
<dbReference type="PIR" id="A02697">
    <property type="entry name" value="R3LV2"/>
</dbReference>
<dbReference type="RefSeq" id="NP_039278.1">
    <property type="nucleotide sequence ID" value="NC_001319.1"/>
</dbReference>
<dbReference type="RefSeq" id="YP_009646795.1">
    <property type="nucleotide sequence ID" value="NC_042505.1"/>
</dbReference>
<dbReference type="SMR" id="P06354"/>
<dbReference type="GeneID" id="2702536"/>
<dbReference type="GeneID" id="40386674"/>
<dbReference type="GO" id="GO:0009507">
    <property type="term" value="C:chloroplast"/>
    <property type="evidence" value="ECO:0007669"/>
    <property type="project" value="UniProtKB-SubCell"/>
</dbReference>
<dbReference type="GO" id="GO:0015935">
    <property type="term" value="C:small ribosomal subunit"/>
    <property type="evidence" value="ECO:0007669"/>
    <property type="project" value="InterPro"/>
</dbReference>
<dbReference type="GO" id="GO:0003735">
    <property type="term" value="F:structural constituent of ribosome"/>
    <property type="evidence" value="ECO:0007669"/>
    <property type="project" value="InterPro"/>
</dbReference>
<dbReference type="GO" id="GO:0006412">
    <property type="term" value="P:translation"/>
    <property type="evidence" value="ECO:0007669"/>
    <property type="project" value="UniProtKB-UniRule"/>
</dbReference>
<dbReference type="CDD" id="cd01425">
    <property type="entry name" value="RPS2"/>
    <property type="match status" value="1"/>
</dbReference>
<dbReference type="FunFam" id="1.10.287.610:FF:000001">
    <property type="entry name" value="30S ribosomal protein S2"/>
    <property type="match status" value="1"/>
</dbReference>
<dbReference type="Gene3D" id="3.40.50.10490">
    <property type="entry name" value="Glucose-6-phosphate isomerase like protein, domain 1"/>
    <property type="match status" value="1"/>
</dbReference>
<dbReference type="Gene3D" id="1.10.287.610">
    <property type="entry name" value="Helix hairpin bin"/>
    <property type="match status" value="1"/>
</dbReference>
<dbReference type="HAMAP" id="MF_00291_B">
    <property type="entry name" value="Ribosomal_uS2_B"/>
    <property type="match status" value="1"/>
</dbReference>
<dbReference type="InterPro" id="IPR001865">
    <property type="entry name" value="Ribosomal_uS2"/>
</dbReference>
<dbReference type="InterPro" id="IPR005706">
    <property type="entry name" value="Ribosomal_uS2_bac/mit/plastid"/>
</dbReference>
<dbReference type="InterPro" id="IPR018130">
    <property type="entry name" value="Ribosomal_uS2_CS"/>
</dbReference>
<dbReference type="InterPro" id="IPR023591">
    <property type="entry name" value="Ribosomal_uS2_flav_dom_sf"/>
</dbReference>
<dbReference type="NCBIfam" id="TIGR01011">
    <property type="entry name" value="rpsB_bact"/>
    <property type="match status" value="1"/>
</dbReference>
<dbReference type="PANTHER" id="PTHR12534">
    <property type="entry name" value="30S RIBOSOMAL PROTEIN S2 PROKARYOTIC AND ORGANELLAR"/>
    <property type="match status" value="1"/>
</dbReference>
<dbReference type="PANTHER" id="PTHR12534:SF0">
    <property type="entry name" value="SMALL RIBOSOMAL SUBUNIT PROTEIN US2M"/>
    <property type="match status" value="1"/>
</dbReference>
<dbReference type="Pfam" id="PF00318">
    <property type="entry name" value="Ribosomal_S2"/>
    <property type="match status" value="1"/>
</dbReference>
<dbReference type="PRINTS" id="PR00395">
    <property type="entry name" value="RIBOSOMALS2"/>
</dbReference>
<dbReference type="SUPFAM" id="SSF52313">
    <property type="entry name" value="Ribosomal protein S2"/>
    <property type="match status" value="1"/>
</dbReference>
<dbReference type="PROSITE" id="PS00962">
    <property type="entry name" value="RIBOSOMAL_S2_1"/>
    <property type="match status" value="1"/>
</dbReference>
<dbReference type="PROSITE" id="PS00963">
    <property type="entry name" value="RIBOSOMAL_S2_2"/>
    <property type="match status" value="1"/>
</dbReference>
<organism>
    <name type="scientific">Marchantia polymorpha</name>
    <name type="common">Common liverwort</name>
    <name type="synonym">Marchantia aquatica</name>
    <dbReference type="NCBI Taxonomy" id="3197"/>
    <lineage>
        <taxon>Eukaryota</taxon>
        <taxon>Viridiplantae</taxon>
        <taxon>Streptophyta</taxon>
        <taxon>Embryophyta</taxon>
        <taxon>Marchantiophyta</taxon>
        <taxon>Marchantiopsida</taxon>
        <taxon>Marchantiidae</taxon>
        <taxon>Marchantiales</taxon>
        <taxon>Marchantiaceae</taxon>
        <taxon>Marchantia</taxon>
    </lineage>
</organism>
<protein>
    <recommendedName>
        <fullName evidence="1">Small ribosomal subunit protein uS2c</fullName>
    </recommendedName>
    <alternativeName>
        <fullName>30S ribosomal protein S2, chloroplastic</fullName>
    </alternativeName>
</protein>
<reference key="1">
    <citation type="journal article" date="1986" name="Nature">
        <title>Chloroplast gene organization deduced from complete sequence of liverwort Marchantia polymorpha chloroplast DNA.</title>
        <authorList>
            <person name="Ohyama K."/>
            <person name="Fukuzawa H."/>
            <person name="Kohchi T."/>
            <person name="Shirai H."/>
            <person name="Sano T."/>
            <person name="Sano S."/>
            <person name="Umesono K."/>
            <person name="Shiki Y."/>
            <person name="Takeuchi M."/>
            <person name="Chang Z."/>
            <person name="Aota S."/>
            <person name="Inokuchi H."/>
            <person name="Ozeki H."/>
        </authorList>
    </citation>
    <scope>NUCLEOTIDE SEQUENCE [LARGE SCALE GENOMIC DNA]</scope>
</reference>
<reference key="2">
    <citation type="journal article" date="1988" name="J. Mol. Biol.">
        <title>Structure and organization of Marchantia polymorpha chloroplast genome. II. Gene organization of the large single copy region from rps'12 to atpB.</title>
        <authorList>
            <person name="Umesono K."/>
            <person name="Inokuchi H."/>
            <person name="Shiki Y."/>
            <person name="Takeuchi M."/>
            <person name="Chang Z."/>
            <person name="Fukuzawa H."/>
            <person name="Kohchi T."/>
            <person name="Shirai H."/>
            <person name="Ohyama K."/>
            <person name="Ozeki H."/>
        </authorList>
    </citation>
    <scope>NUCLEOTIDE SEQUENCE [GENOMIC DNA]</scope>
</reference>
<sequence>MKQKSWNIHLEEMMEAGVHFGHQARKWNPKMAPYIFTERKGIHIINLTQTARFLSEACDLVANASSKGKQFLIVGTKYQAADLIESSALKARCHYVNQKWLGGMLTNWSTIETRLQKFKDLENKKKTGTINRLPKKEAANLKRQLDHLQKYLGGIKYMTSLPDIVIIIDQQKEFTAIQECITLGIPTICLVDTDCDPDMTDIPIPANDDARASIRWILNKLTLAICEGRYNSIKN</sequence>